<accession>Q9WVL6</accession>
<accession>E9QKN8</accession>
<protein>
    <recommendedName>
        <fullName evidence="1">Exostosin-like 3</fullName>
        <ecNumber evidence="1">2.4.1.223</ecNumber>
    </recommendedName>
    <alternativeName>
        <fullName>Glucuronyl-galactosyl-proteoglycan 4-alpha-N-acetylglucosaminyltransferase</fullName>
    </alternativeName>
    <alternativeName>
        <fullName evidence="1">Multiple exostosis-like protein 3</fullName>
    </alternativeName>
</protein>
<sequence length="918" mass="104474">MTGYTMLRNGGVGNGGQTCMLRWSNRIRLTWLSFTLFIILVFFPLIAHYYLTTLDEADEAGKRIFGPRAGSELCEVKHVLDLCRIRESVSEELLQLEAKRQELNSEIAKLNLKIEACKKSIENAKQDLLQLKNVISQTEHSYKELMAQNQPKLSLPIRLLPEKDDAGLPPPKVTRGCRLHNCFDYSRCPLTSGFPVYVYDSDQFAFGSYLDPLVKQAFQATVRANVYVTENAAIACLYVVLVGEMQEPTVLRPADLEKQLFSLPHWRTDGHNHVIINLSRKSDTQNLLYNVSTGRHVAQSTFYAAQYRAGFDLVVSPLVHAMSEPNFMEIPPQVPVKRKYLFTFQGEKIESLRSSLQEARSFEEEMEGDPPADYDDRIIATLKAVQDSKLDQVLVEFTCKNQPKPSLPTEWALCGEREDRLELLKLSTFALIITPGDPHLLISSGCATRLFEALEVGAVPVVLGEQVQLPYHDMLQWNEAALVVPKPRVTEVHFLLRSLSDSDLLAMRRQGRFLWETYFSTADSIFNTVLAMIRTRIQIPAAPIREEVAAEIPHRSGKAAGTDPNMADNGDLDLGPVETEPPYASPKYLRNFTLTVTDCYRGWNSAPGPFHLFPHTPFDPVLPSEAKFLGSGTGFRPIGGGAGGSGKEFQAALGGNVQREQFTVVMLTYEREEVLMNSLERLNGLPYLNKVVVVWNSPKLPSEDLLWPDIGVPIMVVRTEKNSLNNRFLPWNEIETEAILSIDDDAHLRHDEIMFGFRVWREARDRIVGFPGRYHAWDIPHQSWLYNSNYSCELSMVLTGAAFFHKYYAYLYSYVMPQAIRDMVDEYINCEDIAMNFLVSHITRKPPIKVTSRWTFRCPGCPQALSHDDSHFHERHKCINFFVKVYGYMPLLYTQFRVDSVLFKTRLPHDKTKCFKFI</sequence>
<reference key="1">
    <citation type="submission" date="1998-08" db="EMBL/GenBank/DDBJ databases">
        <title>Molecular cloning of the mouse homolog of EXT1L.</title>
        <authorList>
            <person name="Sato T."/>
        </authorList>
    </citation>
    <scope>NUCLEOTIDE SEQUENCE [MRNA]</scope>
</reference>
<reference key="2">
    <citation type="journal article" date="2009" name="PLoS Biol.">
        <title>Lineage-specific biology revealed by a finished genome assembly of the mouse.</title>
        <authorList>
            <person name="Church D.M."/>
            <person name="Goodstadt L."/>
            <person name="Hillier L.W."/>
            <person name="Zody M.C."/>
            <person name="Goldstein S."/>
            <person name="She X."/>
            <person name="Bult C.J."/>
            <person name="Agarwala R."/>
            <person name="Cherry J.L."/>
            <person name="DiCuccio M."/>
            <person name="Hlavina W."/>
            <person name="Kapustin Y."/>
            <person name="Meric P."/>
            <person name="Maglott D."/>
            <person name="Birtle Z."/>
            <person name="Marques A.C."/>
            <person name="Graves T."/>
            <person name="Zhou S."/>
            <person name="Teague B."/>
            <person name="Potamousis K."/>
            <person name="Churas C."/>
            <person name="Place M."/>
            <person name="Herschleb J."/>
            <person name="Runnheim R."/>
            <person name="Forrest D."/>
            <person name="Amos-Landgraf J."/>
            <person name="Schwartz D.C."/>
            <person name="Cheng Z."/>
            <person name="Lindblad-Toh K."/>
            <person name="Eichler E.E."/>
            <person name="Ponting C.P."/>
        </authorList>
    </citation>
    <scope>NUCLEOTIDE SEQUENCE [LARGE SCALE GENOMIC DNA]</scope>
    <source>
        <strain>C57BL/6J</strain>
    </source>
</reference>
<reference key="3">
    <citation type="journal article" date="2009" name="Biochem. Biophys. Res. Commun.">
        <title>Important role of heparan sulfate in postnatal islet growth and insulin secretion.</title>
        <authorList>
            <person name="Takahashi I."/>
            <person name="Noguchi N."/>
            <person name="Nata K."/>
            <person name="Yamada S."/>
            <person name="Kaneiwa T."/>
            <person name="Mizumoto S."/>
            <person name="Ikeda T."/>
            <person name="Sugihara K."/>
            <person name="Asano M."/>
            <person name="Yoshikawa T."/>
            <person name="Yamauchi A."/>
            <person name="Shervani N.J."/>
            <person name="Uruno A."/>
            <person name="Kato I."/>
            <person name="Unno M."/>
            <person name="Sugahara K."/>
            <person name="Takasawa S."/>
            <person name="Okamoto H."/>
            <person name="Sugawara A."/>
        </authorList>
    </citation>
    <scope>FUNCTION</scope>
    <scope>TISSUE SPECIFICITY</scope>
    <scope>DISRUPTION PHENOTYPE</scope>
</reference>
<reference key="4">
    <citation type="journal article" date="2010" name="Cell">
        <title>A tissue-specific atlas of mouse protein phosphorylation and expression.</title>
        <authorList>
            <person name="Huttlin E.L."/>
            <person name="Jedrychowski M.P."/>
            <person name="Elias J.E."/>
            <person name="Goswami T."/>
            <person name="Rad R."/>
            <person name="Beausoleil S.A."/>
            <person name="Villen J."/>
            <person name="Haas W."/>
            <person name="Sowa M.E."/>
            <person name="Gygi S.P."/>
        </authorList>
    </citation>
    <scope>PHOSPHORYLATION [LARGE SCALE ANALYSIS] AT SER-361</scope>
    <scope>IDENTIFICATION BY MASS SPECTROMETRY [LARGE SCALE ANALYSIS]</scope>
    <source>
        <tissue>Kidney</tissue>
        <tissue>Lung</tissue>
        <tissue>Pancreas</tissue>
    </source>
</reference>
<reference key="5">
    <citation type="journal article" date="2017" name="J. Exp. Med.">
        <title>IL-22 induces Reg3gamma and inhibits allergic inflammation in house dust mite-induced asthma models.</title>
        <authorList>
            <person name="Ito T."/>
            <person name="Hirose K."/>
            <person name="Saku A."/>
            <person name="Kono K."/>
            <person name="Takatori H."/>
            <person name="Tamachi T."/>
            <person name="Goto Y."/>
            <person name="Renauld J.C."/>
            <person name="Kiyono H."/>
            <person name="Nakajima H."/>
        </authorList>
    </citation>
    <scope>FUNCTION</scope>
    <scope>TISSUE SPECIFICITY</scope>
</reference>
<reference key="6">
    <citation type="journal article" date="2022" name="Cell Metab.">
        <title>The gut peptide Reg3g links the small intestine microbiome to the regulation of energy balance, glucose levels, and gut function.</title>
        <authorList>
            <person name="Shin J.H."/>
            <person name="Bozadjieva-Kramer N."/>
            <person name="Shao Y."/>
            <person name="Lyons-Abbott S."/>
            <person name="Rupp A.C."/>
            <person name="Sandoval D.A."/>
            <person name="Seeley R.J."/>
        </authorList>
    </citation>
    <scope>FUNCTION</scope>
    <scope>TISSUE SPECIFICITY</scope>
</reference>
<reference key="7">
    <citation type="journal article" date="2022" name="Cell Rep.">
        <title>Nociceptor-derived Reg3gamma prevents endotoxic death by targeting kynurenine pathway in microglia.</title>
        <authorList>
            <person name="Sugisawa E."/>
            <person name="Kondo T."/>
            <person name="Kumagai Y."/>
            <person name="Kato H."/>
            <person name="Takayama Y."/>
            <person name="Isohashi K."/>
            <person name="Shimosegawa E."/>
            <person name="Takemura N."/>
            <person name="Hayashi Y."/>
            <person name="Sasaki T."/>
            <person name="Martino M.M."/>
            <person name="Tominaga M."/>
            <person name="Maruyama K."/>
        </authorList>
    </citation>
    <scope>FUNCTION</scope>
    <scope>TISSUE SPECIFICITY</scope>
</reference>
<keyword id="KW-1003">Cell membrane</keyword>
<keyword id="KW-1015">Disulfide bond</keyword>
<keyword id="KW-0256">Endoplasmic reticulum</keyword>
<keyword id="KW-0325">Glycoprotein</keyword>
<keyword id="KW-0328">Glycosyltransferase</keyword>
<keyword id="KW-0333">Golgi apparatus</keyword>
<keyword id="KW-0464">Manganese</keyword>
<keyword id="KW-0472">Membrane</keyword>
<keyword id="KW-0479">Metal-binding</keyword>
<keyword id="KW-0539">Nucleus</keyword>
<keyword id="KW-0597">Phosphoprotein</keyword>
<keyword id="KW-0675">Receptor</keyword>
<keyword id="KW-1185">Reference proteome</keyword>
<keyword id="KW-0735">Signal-anchor</keyword>
<keyword id="KW-0808">Transferase</keyword>
<keyword id="KW-0812">Transmembrane</keyword>
<keyword id="KW-1133">Transmembrane helix</keyword>
<evidence type="ECO:0000250" key="1">
    <source>
        <dbReference type="UniProtKB" id="O43909"/>
    </source>
</evidence>
<evidence type="ECO:0000250" key="2">
    <source>
        <dbReference type="UniProtKB" id="Q9ES89"/>
    </source>
</evidence>
<evidence type="ECO:0000255" key="3"/>
<evidence type="ECO:0000269" key="4">
    <source>
    </source>
</evidence>
<evidence type="ECO:0000269" key="5">
    <source>
    </source>
</evidence>
<evidence type="ECO:0000269" key="6">
    <source>
    </source>
</evidence>
<evidence type="ECO:0000269" key="7">
    <source>
    </source>
</evidence>
<evidence type="ECO:0000305" key="8"/>
<evidence type="ECO:0000312" key="9">
    <source>
        <dbReference type="MGI" id="MGI:1860765"/>
    </source>
</evidence>
<evidence type="ECO:0007744" key="10">
    <source>
    </source>
</evidence>
<feature type="chain" id="PRO_0000149658" description="Exostosin-like 3">
    <location>
        <begin position="1"/>
        <end position="918"/>
    </location>
</feature>
<feature type="topological domain" description="Cytoplasmic" evidence="3">
    <location>
        <begin position="1"/>
        <end position="30"/>
    </location>
</feature>
<feature type="transmembrane region" description="Helical; Signal-anchor for type II membrane protein" evidence="3">
    <location>
        <begin position="31"/>
        <end position="51"/>
    </location>
</feature>
<feature type="topological domain" description="Lumenal" evidence="3">
    <location>
        <begin position="52"/>
        <end position="918"/>
    </location>
</feature>
<feature type="region of interest" description="Required for interaction with REG3A" evidence="1">
    <location>
        <begin position="1"/>
        <end position="140"/>
    </location>
</feature>
<feature type="active site" evidence="2">
    <location>
        <position position="832"/>
    </location>
</feature>
<feature type="binding site" evidence="1">
    <location>
        <position position="667"/>
    </location>
    <ligand>
        <name>UDP-N-acetyl-alpha-D-glucosamine</name>
        <dbReference type="ChEBI" id="CHEBI:57705"/>
    </ligand>
</feature>
<feature type="binding site" evidence="1">
    <location>
        <position position="671"/>
    </location>
    <ligand>
        <name>UDP-N-acetyl-alpha-D-glucosamine</name>
        <dbReference type="ChEBI" id="CHEBI:57705"/>
    </ligand>
</feature>
<feature type="binding site" evidence="1">
    <location>
        <position position="696"/>
    </location>
    <ligand>
        <name>UDP-N-acetyl-alpha-D-glucosamine</name>
        <dbReference type="ChEBI" id="CHEBI:57705"/>
    </ligand>
</feature>
<feature type="binding site" evidence="2">
    <location>
        <position position="722"/>
    </location>
    <ligand>
        <name>UDP-N-acetyl-alpha-D-glucosamine</name>
        <dbReference type="ChEBI" id="CHEBI:57705"/>
    </ligand>
</feature>
<feature type="binding site" evidence="2">
    <location>
        <position position="727"/>
    </location>
    <ligand>
        <name>UDP-N-acetyl-alpha-D-glucosamine</name>
        <dbReference type="ChEBI" id="CHEBI:57705"/>
    </ligand>
</feature>
<feature type="binding site" evidence="2">
    <location>
        <position position="743"/>
    </location>
    <ligand>
        <name>UDP-N-acetyl-alpha-D-glucosamine</name>
        <dbReference type="ChEBI" id="CHEBI:57705"/>
    </ligand>
</feature>
<feature type="binding site" evidence="2">
    <location>
        <position position="744"/>
    </location>
    <ligand>
        <name>UDP-N-acetyl-alpha-D-glucosamine</name>
        <dbReference type="ChEBI" id="CHEBI:57705"/>
    </ligand>
</feature>
<feature type="binding site" evidence="1">
    <location>
        <position position="745"/>
    </location>
    <ligand>
        <name>Mn(2+)</name>
        <dbReference type="ChEBI" id="CHEBI:29035"/>
        <note>catalytic</note>
    </ligand>
</feature>
<feature type="binding site" evidence="1">
    <location>
        <position position="745"/>
    </location>
    <ligand>
        <name>UDP-N-acetyl-alpha-D-glucosamine</name>
        <dbReference type="ChEBI" id="CHEBI:57705"/>
    </ligand>
</feature>
<feature type="binding site" evidence="2">
    <location>
        <position position="831"/>
    </location>
    <ligand>
        <name>UDP-N-acetyl-alpha-D-glucosamine</name>
        <dbReference type="ChEBI" id="CHEBI:57705"/>
    </ligand>
</feature>
<feature type="binding site" evidence="2">
    <location>
        <position position="832"/>
    </location>
    <ligand>
        <name>UDP-N-acetyl-alpha-D-glucosamine</name>
        <dbReference type="ChEBI" id="CHEBI:57705"/>
    </ligand>
</feature>
<feature type="binding site" evidence="2">
    <location>
        <position position="875"/>
    </location>
    <ligand>
        <name>UDP-N-acetyl-alpha-D-glucosamine</name>
        <dbReference type="ChEBI" id="CHEBI:57705"/>
    </ligand>
</feature>
<feature type="site" description="Not glycosylated" evidence="1">
    <location>
        <position position="277"/>
    </location>
</feature>
<feature type="modified residue" description="Phosphoserine" evidence="10">
    <location>
        <position position="361"/>
    </location>
</feature>
<feature type="glycosylation site" description="N-linked (GlcNAc...) asparagine" evidence="3">
    <location>
        <position position="290"/>
    </location>
</feature>
<feature type="glycosylation site" description="N-linked (GlcNAc...) asparagine" evidence="3">
    <location>
        <position position="591"/>
    </location>
</feature>
<feature type="glycosylation site" description="N-linked (GlcNAc...) asparagine" evidence="3">
    <location>
        <position position="789"/>
    </location>
</feature>
<feature type="disulfide bond" evidence="1">
    <location>
        <begin position="177"/>
        <end position="182"/>
    </location>
</feature>
<feature type="disulfide bond" evidence="1">
    <location>
        <begin position="188"/>
        <end position="236"/>
    </location>
</feature>
<feature type="disulfide bond" evidence="1">
    <location>
        <begin position="399"/>
        <end position="414"/>
    </location>
</feature>
<feature type="disulfide bond" description="Interchain (with C-914)" evidence="1">
    <location>
        <position position="792"/>
    </location>
</feature>
<feature type="disulfide bond" evidence="1">
    <location>
        <begin position="830"/>
        <end position="878"/>
    </location>
</feature>
<feature type="disulfide bond" description="Interchain (with C-792)" evidence="1">
    <location>
        <position position="914"/>
    </location>
</feature>
<feature type="sequence conflict" description="In Ref. 1; AAD42040." evidence="8" ref="1">
    <original>F</original>
    <variation>L</variation>
    <location>
        <position position="302"/>
    </location>
</feature>
<feature type="sequence conflict" description="In Ref. 1; AAD42040." evidence="8" ref="1">
    <original>H</original>
    <variation>R</variation>
    <location>
        <position position="439"/>
    </location>
</feature>
<feature type="sequence conflict" description="In Ref. 1; AAD42040." evidence="8" ref="1">
    <original>P</original>
    <variation>R</variation>
    <location>
        <position position="609"/>
    </location>
</feature>
<feature type="sequence conflict" description="In Ref. 1; AAD42040." evidence="8" ref="1">
    <original>R</original>
    <variation>W</variation>
    <location>
        <position position="758"/>
    </location>
</feature>
<name>EXTL3_MOUSE</name>
<comment type="function">
    <text evidence="1 4">Glycosyltransferase which regulates the biosynthesis of heparan sulfate (HS) (PubMed:19336225). Initiates HS synthesis by transferring the first N-acetyl-alpha-D-glucosamine (alpha-GlcNAc) residue (GlcNAcT-I activity) to the tetrasaccharide linker (GlcA-Gal-Gal-Xyl-)Ser core linker. May also transfer alpha-GlcNAc residues during HS elongation (GlcNAcT-II activity). Lacks glucuronyl transferase II (GlcAT-II) activity. Important for both skeletal development and hematopoiesis, through the formation of HS proteoglycans (HSPGs) (By similarity). Through the synthesis of HS, regulates postnatal pancreatic islet maturation and insulin secretion (PubMed:19336225).</text>
</comment>
<comment type="function">
    <text evidence="1 5 6 7">Receptor for REG3A, REG3B and REG3G, induces the activation of downstream signaling pathways such as PI3K-AKT or RAS-RAF-MEK-ERK signaling pathway (PubMed:28811323, PubMed:35263589, PubMed:36240758). Required for the function of REG3A in regulating keratinocyte proliferation and differentiation (By similarity). Required for the inhibition of skin inflammation mediated by REG3A through the activation of PI3K-AKT-STAT3 pathway (By similarity). Required for the function of REG3A and REG3G in glucose tolerance in pancreas (PubMed:36240758). Expressed in microglia, is activated by nociceptor-derived REG3G in response to endotoxins, leading to the inhibition of kynurenine pathway to prevent endotoxic death (PubMed:35263589).</text>
</comment>
<comment type="catalytic activity">
    <reaction evidence="1">
        <text>3-O-(beta-D-GlcA-(1-&gt;3)-beta-D-Gal-(1-&gt;3)-beta-D-Gal-(1-&gt;4)-beta-D-Xyl)-L-seryl-[protein] + UDP-N-acetyl-alpha-D-glucosamine = 3-O-(alpha-D-GlcNAc-(1-&gt;4)-beta-D-GlcA-(1-&gt;3)-beta-D-Gal-(1-&gt;3)-beta-D-Gal-(1-&gt;4)-beta-D-Xyl)-L-seryl-[protein] + UDP + H(+)</text>
        <dbReference type="Rhea" id="RHEA:16221"/>
        <dbReference type="Rhea" id="RHEA-COMP:12573"/>
        <dbReference type="Rhea" id="RHEA-COMP:12574"/>
        <dbReference type="ChEBI" id="CHEBI:15378"/>
        <dbReference type="ChEBI" id="CHEBI:57705"/>
        <dbReference type="ChEBI" id="CHEBI:58223"/>
        <dbReference type="ChEBI" id="CHEBI:132093"/>
        <dbReference type="ChEBI" id="CHEBI:132104"/>
        <dbReference type="EC" id="2.4.1.223"/>
    </reaction>
</comment>
<comment type="cofactor">
    <cofactor evidence="2">
        <name>Mn(2+)</name>
        <dbReference type="ChEBI" id="CHEBI:29035"/>
    </cofactor>
</comment>
<comment type="pathway">
    <text evidence="1">Glycan metabolism; heparan sulfate biosynthesis.</text>
</comment>
<comment type="subunit">
    <text evidence="1">Homodimer; disulfide-linked. Interacts with REG3A.</text>
</comment>
<comment type="subcellular location">
    <subcellularLocation>
        <location evidence="1">Endoplasmic reticulum membrane</location>
        <topology evidence="1">Single-pass type II membrane protein</topology>
    </subcellularLocation>
    <subcellularLocation>
        <location evidence="1">Golgi apparatus</location>
    </subcellularLocation>
    <subcellularLocation>
        <location evidence="1">Cell membrane</location>
    </subcellularLocation>
    <subcellularLocation>
        <location evidence="1">Nucleus</location>
    </subcellularLocation>
    <text evidence="1">Interaction with REG3A induces its translocation to the nucleus.</text>
</comment>
<comment type="tissue specificity">
    <text evidence="4 5 6 7">Expressed in pancreatic islet beta-cells (PubMed:19336225, PubMed:36240758). Expressed in lung epithelial cells (PubMed:28811323). Expressed in microglia (PubMed:35263589).</text>
</comment>
<comment type="domain">
    <text evidence="1">The N-terminal glycosyltransferase domain (GT47) does not bind UDP and is therefore unlikely to possess glycosyltransferase activity.</text>
</comment>
<comment type="disruption phenotype">
    <text evidence="4">Embryonically lethal at 9 days post-coitum (dpc) (PubMed:19336225). Embryos are defective in heparan sulfate (HS) synthesis (PubMed:19336225). Conditional knockout in pancreatic islet beta-cells results in a lack of HS in pancreatic islet beta-cells (PubMed:19336225). Abnormal pancreatic islet morphology with reduced beta-cell proliferation and glucose intolerance due to defective insulin secretion (PubMed:19336225).</text>
</comment>
<comment type="similarity">
    <text evidence="8">Belongs to the glycosyltransferase 47 family.</text>
</comment>
<comment type="online information" name="Functional Glycomics Gateway - GTase">
    <link uri="http://www.functionalglycomics.org/glycomics/molecule/jsp/glycoEnzyme/viewGlycoEnzyme.jsp?gbpId=gt_mou_580"/>
    <text>EXTL3 (Putative GlcNAc Transferase I) [GAG Enzyme]</text>
</comment>
<proteinExistence type="evidence at protein level"/>
<dbReference type="EC" id="2.4.1.223" evidence="1"/>
<dbReference type="EMBL" id="AF083550">
    <property type="protein sequence ID" value="AAD42040.1"/>
    <property type="molecule type" value="mRNA"/>
</dbReference>
<dbReference type="EMBL" id="AC155172">
    <property type="status" value="NOT_ANNOTATED_CDS"/>
    <property type="molecule type" value="Genomic_DNA"/>
</dbReference>
<dbReference type="SMR" id="Q9WVL6"/>
<dbReference type="FunCoup" id="Q9WVL6">
    <property type="interactions" value="1973"/>
</dbReference>
<dbReference type="STRING" id="10090.ENSMUSP00000153547"/>
<dbReference type="CAZy" id="GT47">
    <property type="family name" value="Glycosyltransferase Family 47"/>
</dbReference>
<dbReference type="CAZy" id="GT64">
    <property type="family name" value="Glycosyltransferase Family 64"/>
</dbReference>
<dbReference type="GlyCosmos" id="Q9WVL6">
    <property type="glycosylation" value="4 sites, No reported glycans"/>
</dbReference>
<dbReference type="GlyGen" id="Q9WVL6">
    <property type="glycosylation" value="4 sites, 3 N-linked glycans (3 sites)"/>
</dbReference>
<dbReference type="iPTMnet" id="Q9WVL6"/>
<dbReference type="PhosphoSitePlus" id="Q9WVL6"/>
<dbReference type="SwissPalm" id="Q9WVL6"/>
<dbReference type="jPOST" id="Q9WVL6"/>
<dbReference type="PaxDb" id="10090-ENSMUSP00000022550"/>
<dbReference type="PeptideAtlas" id="Q9WVL6"/>
<dbReference type="ProteomicsDB" id="275561"/>
<dbReference type="Pumba" id="Q9WVL6"/>
<dbReference type="AGR" id="MGI:1860765"/>
<dbReference type="MGI" id="MGI:1860765">
    <property type="gene designation" value="Extl3"/>
</dbReference>
<dbReference type="eggNOG" id="KOG2264">
    <property type="taxonomic scope" value="Eukaryota"/>
</dbReference>
<dbReference type="InParanoid" id="Q9WVL6"/>
<dbReference type="UniPathway" id="UPA00756"/>
<dbReference type="ChiTaRS" id="Extl3">
    <property type="organism name" value="mouse"/>
</dbReference>
<dbReference type="PRO" id="PR:Q9WVL6"/>
<dbReference type="Proteomes" id="UP000000589">
    <property type="component" value="Unplaced"/>
</dbReference>
<dbReference type="RNAct" id="Q9WVL6">
    <property type="molecule type" value="protein"/>
</dbReference>
<dbReference type="GO" id="GO:0005789">
    <property type="term" value="C:endoplasmic reticulum membrane"/>
    <property type="evidence" value="ECO:0007669"/>
    <property type="project" value="UniProtKB-SubCell"/>
</dbReference>
<dbReference type="GO" id="GO:0005794">
    <property type="term" value="C:Golgi apparatus"/>
    <property type="evidence" value="ECO:0000250"/>
    <property type="project" value="UniProtKB"/>
</dbReference>
<dbReference type="GO" id="GO:0005634">
    <property type="term" value="C:nucleus"/>
    <property type="evidence" value="ECO:0007669"/>
    <property type="project" value="UniProtKB-SubCell"/>
</dbReference>
<dbReference type="GO" id="GO:0005886">
    <property type="term" value="C:plasma membrane"/>
    <property type="evidence" value="ECO:0000314"/>
    <property type="project" value="UniProt"/>
</dbReference>
<dbReference type="GO" id="GO:0001888">
    <property type="term" value="F:glucuronyl-galactosyl-proteoglycan 4-alpha-N-acetylglucosaminyltransferase activity"/>
    <property type="evidence" value="ECO:0007669"/>
    <property type="project" value="UniProtKB-EC"/>
</dbReference>
<dbReference type="GO" id="GO:0016757">
    <property type="term" value="F:glycosyltransferase activity"/>
    <property type="evidence" value="ECO:0000250"/>
    <property type="project" value="UniProtKB"/>
</dbReference>
<dbReference type="GO" id="GO:0046872">
    <property type="term" value="F:metal ion binding"/>
    <property type="evidence" value="ECO:0007669"/>
    <property type="project" value="UniProtKB-KW"/>
</dbReference>
<dbReference type="GO" id="GO:0016500">
    <property type="term" value="F:protein-hormone receptor activity"/>
    <property type="evidence" value="ECO:0000314"/>
    <property type="project" value="UniProt"/>
</dbReference>
<dbReference type="GO" id="GO:0015012">
    <property type="term" value="P:heparan sulfate proteoglycan biosynthetic process"/>
    <property type="evidence" value="ECO:0000315"/>
    <property type="project" value="UniProtKB"/>
</dbReference>
<dbReference type="GO" id="GO:1900016">
    <property type="term" value="P:negative regulation of cytokine production involved in inflammatory response"/>
    <property type="evidence" value="ECO:0000314"/>
    <property type="project" value="UniProt"/>
</dbReference>
<dbReference type="GO" id="GO:0050728">
    <property type="term" value="P:negative regulation of inflammatory response"/>
    <property type="evidence" value="ECO:0000314"/>
    <property type="project" value="UniProt"/>
</dbReference>
<dbReference type="GO" id="GO:0106015">
    <property type="term" value="P:negative regulation of inflammatory response to wounding"/>
    <property type="evidence" value="ECO:0000314"/>
    <property type="project" value="UniProt"/>
</dbReference>
<dbReference type="GO" id="GO:0045617">
    <property type="term" value="P:negative regulation of keratinocyte differentiation"/>
    <property type="evidence" value="ECO:0000314"/>
    <property type="project" value="UniProt"/>
</dbReference>
<dbReference type="GO" id="GO:2000972">
    <property type="term" value="P:positive regulation of detection of glucose"/>
    <property type="evidence" value="ECO:0000315"/>
    <property type="project" value="UniProt"/>
</dbReference>
<dbReference type="GO" id="GO:0010838">
    <property type="term" value="P:positive regulation of keratinocyte proliferation"/>
    <property type="evidence" value="ECO:0000314"/>
    <property type="project" value="UniProt"/>
</dbReference>
<dbReference type="GO" id="GO:0051897">
    <property type="term" value="P:positive regulation of phosphatidylinositol 3-kinase/protein kinase B signal transduction"/>
    <property type="evidence" value="ECO:0000314"/>
    <property type="project" value="UniProt"/>
</dbReference>
<dbReference type="GO" id="GO:0006486">
    <property type="term" value="P:protein glycosylation"/>
    <property type="evidence" value="ECO:0007669"/>
    <property type="project" value="InterPro"/>
</dbReference>
<dbReference type="GO" id="GO:0032496">
    <property type="term" value="P:response to lipopolysaccharide"/>
    <property type="evidence" value="ECO:0000314"/>
    <property type="project" value="UniProt"/>
</dbReference>
<dbReference type="FunFam" id="3.90.550.10:FF:000033">
    <property type="entry name" value="Exostosin-like glycosyltransferase 3"/>
    <property type="match status" value="1"/>
</dbReference>
<dbReference type="Gene3D" id="3.90.550.10">
    <property type="entry name" value="Spore Coat Polysaccharide Biosynthesis Protein SpsA, Chain A"/>
    <property type="match status" value="1"/>
</dbReference>
<dbReference type="InterPro" id="IPR004263">
    <property type="entry name" value="Exostosin"/>
</dbReference>
<dbReference type="InterPro" id="IPR040911">
    <property type="entry name" value="Exostosin_GT47"/>
</dbReference>
<dbReference type="InterPro" id="IPR015338">
    <property type="entry name" value="GT64_dom"/>
</dbReference>
<dbReference type="InterPro" id="IPR029044">
    <property type="entry name" value="Nucleotide-diphossugar_trans"/>
</dbReference>
<dbReference type="PANTHER" id="PTHR48261">
    <property type="entry name" value="ACETYLGLUCOSAMINYLTRANSFERASE"/>
    <property type="match status" value="1"/>
</dbReference>
<dbReference type="PANTHER" id="PTHR48261:SF4">
    <property type="entry name" value="EXOSTOSIN LIKE GLYCOSYLTRANSFERASE 3"/>
    <property type="match status" value="1"/>
</dbReference>
<dbReference type="Pfam" id="PF03016">
    <property type="entry name" value="Exostosin_GT47"/>
    <property type="match status" value="1"/>
</dbReference>
<dbReference type="Pfam" id="PF09258">
    <property type="entry name" value="Glyco_transf_64"/>
    <property type="match status" value="1"/>
</dbReference>
<dbReference type="SUPFAM" id="SSF53448">
    <property type="entry name" value="Nucleotide-diphospho-sugar transferases"/>
    <property type="match status" value="1"/>
</dbReference>
<organism>
    <name type="scientific">Mus musculus</name>
    <name type="common">Mouse</name>
    <dbReference type="NCBI Taxonomy" id="10090"/>
    <lineage>
        <taxon>Eukaryota</taxon>
        <taxon>Metazoa</taxon>
        <taxon>Chordata</taxon>
        <taxon>Craniata</taxon>
        <taxon>Vertebrata</taxon>
        <taxon>Euteleostomi</taxon>
        <taxon>Mammalia</taxon>
        <taxon>Eutheria</taxon>
        <taxon>Euarchontoglires</taxon>
        <taxon>Glires</taxon>
        <taxon>Rodentia</taxon>
        <taxon>Myomorpha</taxon>
        <taxon>Muroidea</taxon>
        <taxon>Muridae</taxon>
        <taxon>Murinae</taxon>
        <taxon>Mus</taxon>
        <taxon>Mus</taxon>
    </lineage>
</organism>
<gene>
    <name evidence="9" type="primary">Extl3</name>
</gene>